<keyword id="KW-0240">DNA-directed RNA polymerase</keyword>
<keyword id="KW-0460">Magnesium</keyword>
<keyword id="KW-0479">Metal-binding</keyword>
<keyword id="KW-0548">Nucleotidyltransferase</keyword>
<keyword id="KW-0804">Transcription</keyword>
<keyword id="KW-0808">Transferase</keyword>
<keyword id="KW-0862">Zinc</keyword>
<accession>B3DTE1</accession>
<name>RPOC_BIFLD</name>
<protein>
    <recommendedName>
        <fullName evidence="1">DNA-directed RNA polymerase subunit beta'</fullName>
        <shortName evidence="1">RNAP subunit beta'</shortName>
        <ecNumber evidence="1">2.7.7.6</ecNumber>
    </recommendedName>
    <alternativeName>
        <fullName evidence="1">RNA polymerase subunit beta'</fullName>
    </alternativeName>
    <alternativeName>
        <fullName evidence="1">Transcriptase subunit beta'</fullName>
    </alternativeName>
</protein>
<sequence>MLDVNAFDKIRIGLATADDIRGWSHGEVKKPETINYRTLKPEKDGLFGEQIFGPTRDWECACGKYKRVRFKGIVCERCGVEVTRSRVRRERMGHIELAAPVTHIWFFKGVPSRLGYLLNVTPKDLERVIYFASYMVTEVNEDERHNDLPGLQDEFDSEIKRLEQRRDSDIEARAKKVEEDLAALEEAGEAKGPARTKLRNGAERDMAAIRTRYNDQIARVDAVFDKFKKLKPGDMVDDVDLWREMQDRYGDYFDGCMGAEAIKKRLQSLDLETISKELREEIKDASEQRKTKALKRLKVVNAFLTTGNKPEAMVLDVIPVIPPDLRPMVQLDGGRFATSDLNDLYRRVINRNNRLKRLIELGAPEIMLNNEKRMLQEAVDSLFDNGRRGRPVTGASNRPLKSLSDMLKGKQGRFRQNLLGKRVDYSGRSVIVVGPSLRMHQCGLPKPMALELFKPFVIKRLVDLNYAQNMKSAKRLVDRGDAEVWGVLEEVISEHPVLLNRAPTLHRLGIQAFEPILVEGKAIHLPPLACAAFNADFDGDQMAVHLPLSAEAQAEARSLMMASDNILKPADGHTVTMPSQDMILGLYYLSTVLEGVKGQGRVFSSLEEAEMALDRHEIDMQAKVLIRLPESFVLPKNWEPGEVKVLDPREGEDEVVKEERFHDGTVLFATSYGRILFNETLPTDYPFVNEQVAKGRLSKIVDDIAMRYSTQQVAATLDALKDLGFTRAPWSGVSFAFSDVNEPPERDEKIAEYEAKADKVNANYEMGLLTEEARRQELIDLWTECTAEVSKEVEEKFDPTSNLAIIVQSGARGNMMQINQIAGMRGLVANPKGEIIPRPVKSNYRDGLSVLEYFISQHGARKGLADTALRTAESGYLTRRLVDVSQDVIVREEDCGTKAGLPIRVAERDNDGNLVLVKAADGGPYSRLLAADVIDPADGQTVLYKRDDALSMDVLNDLVAHGVEEVKCRSVLTCESKRGVCAKCYGWSLATNKLVDVGETVGIVAAQSIGEPGTQLTLRSFHSGGVAAASDITQGLPRVTELFEARTPKGEAPITEFAGSIKIVENDRGRQIILTPDADSGAPKEDGVIKPITYQVSKRVPLKVADGDHIKVGTQLVEGSVDPKKILTILGKRAAQVNIVEEVHTVYRSQGVDIHDKHIEVIVHQMTRRVTIIDSGDTDLLPGELVDNARFREINRNIVKNGGRPAVGRPALMGITKASLATDSWLSAASFQETTRVLTEAALSEKVDDLKGLKENVIIGKLIPAGTGLARYRNAVVEPDKAIRDTIYPNFGLGGDGDLGDASFSDADLSDLNFSNLEFGDLKLGDDFNPDDFYSDQGGQPDIEE</sequence>
<dbReference type="EC" id="2.7.7.6" evidence="1"/>
<dbReference type="EMBL" id="CP000605">
    <property type="protein sequence ID" value="ACD98410.1"/>
    <property type="molecule type" value="Genomic_DNA"/>
</dbReference>
<dbReference type="RefSeq" id="WP_007051319.1">
    <property type="nucleotide sequence ID" value="NZ_AABM02000002.1"/>
</dbReference>
<dbReference type="SMR" id="B3DTE1"/>
<dbReference type="KEGG" id="blj:BLD_0964"/>
<dbReference type="HOGENOM" id="CLU_000524_3_0_11"/>
<dbReference type="Proteomes" id="UP000002419">
    <property type="component" value="Chromosome"/>
</dbReference>
<dbReference type="GO" id="GO:0000428">
    <property type="term" value="C:DNA-directed RNA polymerase complex"/>
    <property type="evidence" value="ECO:0007669"/>
    <property type="project" value="UniProtKB-KW"/>
</dbReference>
<dbReference type="GO" id="GO:0003677">
    <property type="term" value="F:DNA binding"/>
    <property type="evidence" value="ECO:0007669"/>
    <property type="project" value="UniProtKB-UniRule"/>
</dbReference>
<dbReference type="GO" id="GO:0003899">
    <property type="term" value="F:DNA-directed RNA polymerase activity"/>
    <property type="evidence" value="ECO:0007669"/>
    <property type="project" value="UniProtKB-UniRule"/>
</dbReference>
<dbReference type="GO" id="GO:0000287">
    <property type="term" value="F:magnesium ion binding"/>
    <property type="evidence" value="ECO:0007669"/>
    <property type="project" value="UniProtKB-UniRule"/>
</dbReference>
<dbReference type="GO" id="GO:0008270">
    <property type="term" value="F:zinc ion binding"/>
    <property type="evidence" value="ECO:0007669"/>
    <property type="project" value="UniProtKB-UniRule"/>
</dbReference>
<dbReference type="GO" id="GO:0006351">
    <property type="term" value="P:DNA-templated transcription"/>
    <property type="evidence" value="ECO:0007669"/>
    <property type="project" value="UniProtKB-UniRule"/>
</dbReference>
<dbReference type="CDD" id="cd02655">
    <property type="entry name" value="RNAP_beta'_C"/>
    <property type="match status" value="1"/>
</dbReference>
<dbReference type="CDD" id="cd01609">
    <property type="entry name" value="RNAP_beta'_N"/>
    <property type="match status" value="1"/>
</dbReference>
<dbReference type="FunFam" id="1.10.150.390:FF:000002">
    <property type="entry name" value="DNA-directed RNA polymerase subunit beta"/>
    <property type="match status" value="1"/>
</dbReference>
<dbReference type="FunFam" id="4.10.860.120:FF:000001">
    <property type="entry name" value="DNA-directed RNA polymerase subunit beta"/>
    <property type="match status" value="1"/>
</dbReference>
<dbReference type="Gene3D" id="1.10.132.30">
    <property type="match status" value="1"/>
</dbReference>
<dbReference type="Gene3D" id="1.10.150.390">
    <property type="match status" value="1"/>
</dbReference>
<dbReference type="Gene3D" id="1.10.1790.20">
    <property type="match status" value="1"/>
</dbReference>
<dbReference type="Gene3D" id="1.10.40.90">
    <property type="match status" value="1"/>
</dbReference>
<dbReference type="Gene3D" id="2.40.40.20">
    <property type="match status" value="1"/>
</dbReference>
<dbReference type="Gene3D" id="2.40.50.100">
    <property type="match status" value="1"/>
</dbReference>
<dbReference type="Gene3D" id="4.10.860.120">
    <property type="entry name" value="RNA polymerase II, clamp domain"/>
    <property type="match status" value="1"/>
</dbReference>
<dbReference type="Gene3D" id="1.10.274.100">
    <property type="entry name" value="RNA polymerase Rpb1, domain 3"/>
    <property type="match status" value="1"/>
</dbReference>
<dbReference type="HAMAP" id="MF_01322">
    <property type="entry name" value="RNApol_bact_RpoC"/>
    <property type="match status" value="1"/>
</dbReference>
<dbReference type="InterPro" id="IPR045867">
    <property type="entry name" value="DNA-dir_RpoC_beta_prime"/>
</dbReference>
<dbReference type="InterPro" id="IPR012754">
    <property type="entry name" value="DNA-dir_RpoC_beta_prime_bact"/>
</dbReference>
<dbReference type="InterPro" id="IPR000722">
    <property type="entry name" value="RNA_pol_asu"/>
</dbReference>
<dbReference type="InterPro" id="IPR006592">
    <property type="entry name" value="RNA_pol_N"/>
</dbReference>
<dbReference type="InterPro" id="IPR007080">
    <property type="entry name" value="RNA_pol_Rpb1_1"/>
</dbReference>
<dbReference type="InterPro" id="IPR007066">
    <property type="entry name" value="RNA_pol_Rpb1_3"/>
</dbReference>
<dbReference type="InterPro" id="IPR042102">
    <property type="entry name" value="RNA_pol_Rpb1_3_sf"/>
</dbReference>
<dbReference type="InterPro" id="IPR007083">
    <property type="entry name" value="RNA_pol_Rpb1_4"/>
</dbReference>
<dbReference type="InterPro" id="IPR007081">
    <property type="entry name" value="RNA_pol_Rpb1_5"/>
</dbReference>
<dbReference type="InterPro" id="IPR044893">
    <property type="entry name" value="RNA_pol_Rpb1_clamp_domain"/>
</dbReference>
<dbReference type="InterPro" id="IPR038120">
    <property type="entry name" value="Rpb1_funnel_sf"/>
</dbReference>
<dbReference type="NCBIfam" id="NF011498">
    <property type="entry name" value="PRK14906.1"/>
    <property type="match status" value="1"/>
</dbReference>
<dbReference type="NCBIfam" id="TIGR02386">
    <property type="entry name" value="rpoC_TIGR"/>
    <property type="match status" value="1"/>
</dbReference>
<dbReference type="PANTHER" id="PTHR19376">
    <property type="entry name" value="DNA-DIRECTED RNA POLYMERASE"/>
    <property type="match status" value="1"/>
</dbReference>
<dbReference type="PANTHER" id="PTHR19376:SF54">
    <property type="entry name" value="DNA-DIRECTED RNA POLYMERASE SUBUNIT BETA"/>
    <property type="match status" value="1"/>
</dbReference>
<dbReference type="Pfam" id="PF04997">
    <property type="entry name" value="RNA_pol_Rpb1_1"/>
    <property type="match status" value="1"/>
</dbReference>
<dbReference type="Pfam" id="PF00623">
    <property type="entry name" value="RNA_pol_Rpb1_2"/>
    <property type="match status" value="2"/>
</dbReference>
<dbReference type="Pfam" id="PF04983">
    <property type="entry name" value="RNA_pol_Rpb1_3"/>
    <property type="match status" value="1"/>
</dbReference>
<dbReference type="Pfam" id="PF05000">
    <property type="entry name" value="RNA_pol_Rpb1_4"/>
    <property type="match status" value="1"/>
</dbReference>
<dbReference type="Pfam" id="PF04998">
    <property type="entry name" value="RNA_pol_Rpb1_5"/>
    <property type="match status" value="1"/>
</dbReference>
<dbReference type="SMART" id="SM00663">
    <property type="entry name" value="RPOLA_N"/>
    <property type="match status" value="1"/>
</dbReference>
<dbReference type="SUPFAM" id="SSF64484">
    <property type="entry name" value="beta and beta-prime subunits of DNA dependent RNA-polymerase"/>
    <property type="match status" value="1"/>
</dbReference>
<evidence type="ECO:0000255" key="1">
    <source>
        <dbReference type="HAMAP-Rule" id="MF_01322"/>
    </source>
</evidence>
<gene>
    <name evidence="1" type="primary">rpoC</name>
    <name type="ordered locus">BLD_0964</name>
</gene>
<organism>
    <name type="scientific">Bifidobacterium longum (strain DJO10A)</name>
    <dbReference type="NCBI Taxonomy" id="205913"/>
    <lineage>
        <taxon>Bacteria</taxon>
        <taxon>Bacillati</taxon>
        <taxon>Actinomycetota</taxon>
        <taxon>Actinomycetes</taxon>
        <taxon>Bifidobacteriales</taxon>
        <taxon>Bifidobacteriaceae</taxon>
        <taxon>Bifidobacterium</taxon>
    </lineage>
</organism>
<proteinExistence type="inferred from homology"/>
<comment type="function">
    <text evidence="1">DNA-dependent RNA polymerase catalyzes the transcription of DNA into RNA using the four ribonucleoside triphosphates as substrates.</text>
</comment>
<comment type="catalytic activity">
    <reaction evidence="1">
        <text>RNA(n) + a ribonucleoside 5'-triphosphate = RNA(n+1) + diphosphate</text>
        <dbReference type="Rhea" id="RHEA:21248"/>
        <dbReference type="Rhea" id="RHEA-COMP:14527"/>
        <dbReference type="Rhea" id="RHEA-COMP:17342"/>
        <dbReference type="ChEBI" id="CHEBI:33019"/>
        <dbReference type="ChEBI" id="CHEBI:61557"/>
        <dbReference type="ChEBI" id="CHEBI:140395"/>
        <dbReference type="EC" id="2.7.7.6"/>
    </reaction>
</comment>
<comment type="cofactor">
    <cofactor evidence="1">
        <name>Mg(2+)</name>
        <dbReference type="ChEBI" id="CHEBI:18420"/>
    </cofactor>
    <text evidence="1">Binds 1 Mg(2+) ion per subunit.</text>
</comment>
<comment type="cofactor">
    <cofactor evidence="1">
        <name>Zn(2+)</name>
        <dbReference type="ChEBI" id="CHEBI:29105"/>
    </cofactor>
    <text evidence="1">Binds 2 Zn(2+) ions per subunit.</text>
</comment>
<comment type="subunit">
    <text evidence="1">The RNAP catalytic core consists of 2 alpha, 1 beta, 1 beta' and 1 omega subunit. When a sigma factor is associated with the core the holoenzyme is formed, which can initiate transcription.</text>
</comment>
<comment type="similarity">
    <text evidence="1">Belongs to the RNA polymerase beta' chain family.</text>
</comment>
<reference key="1">
    <citation type="journal article" date="2008" name="BMC Genomics">
        <title>Comparative genomic analysis of the gut bacterium Bifidobacterium longum reveals loci susceptible to deletion during pure culture growth.</title>
        <authorList>
            <person name="Lee J.H."/>
            <person name="Karamychev V.N."/>
            <person name="Kozyavkin S.A."/>
            <person name="Mills D."/>
            <person name="Pavlov A.R."/>
            <person name="Pavlova N.V."/>
            <person name="Polouchine N.N."/>
            <person name="Richardson P.M."/>
            <person name="Shakhova V.V."/>
            <person name="Slesarev A.I."/>
            <person name="Weimer B."/>
            <person name="O'Sullivan D.J."/>
        </authorList>
    </citation>
    <scope>NUCLEOTIDE SEQUENCE [LARGE SCALE GENOMIC DNA]</scope>
    <source>
        <strain>DJO10A</strain>
    </source>
</reference>
<feature type="chain" id="PRO_0000353299" description="DNA-directed RNA polymerase subunit beta'">
    <location>
        <begin position="1"/>
        <end position="1345"/>
    </location>
</feature>
<feature type="binding site" evidence="1">
    <location>
        <position position="60"/>
    </location>
    <ligand>
        <name>Zn(2+)</name>
        <dbReference type="ChEBI" id="CHEBI:29105"/>
        <label>1</label>
    </ligand>
</feature>
<feature type="binding site" evidence="1">
    <location>
        <position position="62"/>
    </location>
    <ligand>
        <name>Zn(2+)</name>
        <dbReference type="ChEBI" id="CHEBI:29105"/>
        <label>1</label>
    </ligand>
</feature>
<feature type="binding site" evidence="1">
    <location>
        <position position="75"/>
    </location>
    <ligand>
        <name>Zn(2+)</name>
        <dbReference type="ChEBI" id="CHEBI:29105"/>
        <label>1</label>
    </ligand>
</feature>
<feature type="binding site" evidence="1">
    <location>
        <position position="78"/>
    </location>
    <ligand>
        <name>Zn(2+)</name>
        <dbReference type="ChEBI" id="CHEBI:29105"/>
        <label>1</label>
    </ligand>
</feature>
<feature type="binding site" evidence="1">
    <location>
        <position position="536"/>
    </location>
    <ligand>
        <name>Mg(2+)</name>
        <dbReference type="ChEBI" id="CHEBI:18420"/>
    </ligand>
</feature>
<feature type="binding site" evidence="1">
    <location>
        <position position="538"/>
    </location>
    <ligand>
        <name>Mg(2+)</name>
        <dbReference type="ChEBI" id="CHEBI:18420"/>
    </ligand>
</feature>
<feature type="binding site" evidence="1">
    <location>
        <position position="540"/>
    </location>
    <ligand>
        <name>Mg(2+)</name>
        <dbReference type="ChEBI" id="CHEBI:18420"/>
    </ligand>
</feature>
<feature type="binding site" evidence="1">
    <location>
        <position position="895"/>
    </location>
    <ligand>
        <name>Zn(2+)</name>
        <dbReference type="ChEBI" id="CHEBI:29105"/>
        <label>2</label>
    </ligand>
</feature>
<feature type="binding site" evidence="1">
    <location>
        <position position="974"/>
    </location>
    <ligand>
        <name>Zn(2+)</name>
        <dbReference type="ChEBI" id="CHEBI:29105"/>
        <label>2</label>
    </ligand>
</feature>
<feature type="binding site" evidence="1">
    <location>
        <position position="981"/>
    </location>
    <ligand>
        <name>Zn(2+)</name>
        <dbReference type="ChEBI" id="CHEBI:29105"/>
        <label>2</label>
    </ligand>
</feature>
<feature type="binding site" evidence="1">
    <location>
        <position position="984"/>
    </location>
    <ligand>
        <name>Zn(2+)</name>
        <dbReference type="ChEBI" id="CHEBI:29105"/>
        <label>2</label>
    </ligand>
</feature>